<reference key="1">
    <citation type="journal article" date="2005" name="J. Bacteriol.">
        <title>Insights on evolution of virulence and resistance from the complete genome analysis of an early methicillin-resistant Staphylococcus aureus strain and a biofilm-producing methicillin-resistant Staphylococcus epidermidis strain.</title>
        <authorList>
            <person name="Gill S.R."/>
            <person name="Fouts D.E."/>
            <person name="Archer G.L."/>
            <person name="Mongodin E.F."/>
            <person name="DeBoy R.T."/>
            <person name="Ravel J."/>
            <person name="Paulsen I.T."/>
            <person name="Kolonay J.F."/>
            <person name="Brinkac L.M."/>
            <person name="Beanan M.J."/>
            <person name="Dodson R.J."/>
            <person name="Daugherty S.C."/>
            <person name="Madupu R."/>
            <person name="Angiuoli S.V."/>
            <person name="Durkin A.S."/>
            <person name="Haft D.H."/>
            <person name="Vamathevan J.J."/>
            <person name="Khouri H."/>
            <person name="Utterback T.R."/>
            <person name="Lee C."/>
            <person name="Dimitrov G."/>
            <person name="Jiang L."/>
            <person name="Qin H."/>
            <person name="Weidman J."/>
            <person name="Tran K."/>
            <person name="Kang K.H."/>
            <person name="Hance I.R."/>
            <person name="Nelson K.E."/>
            <person name="Fraser C.M."/>
        </authorList>
    </citation>
    <scope>NUCLEOTIDE SEQUENCE [LARGE SCALE GENOMIC DNA]</scope>
    <source>
        <strain>COL</strain>
    </source>
</reference>
<organism>
    <name type="scientific">Staphylococcus aureus (strain COL)</name>
    <dbReference type="NCBI Taxonomy" id="93062"/>
    <lineage>
        <taxon>Bacteria</taxon>
        <taxon>Bacillati</taxon>
        <taxon>Bacillota</taxon>
        <taxon>Bacilli</taxon>
        <taxon>Bacillales</taxon>
        <taxon>Staphylococcaceae</taxon>
        <taxon>Staphylococcus</taxon>
    </lineage>
</organism>
<proteinExistence type="inferred from homology"/>
<name>GSA2_STAAC</name>
<dbReference type="EC" id="5.4.3.8" evidence="1"/>
<dbReference type="EMBL" id="CP000046">
    <property type="protein sequence ID" value="AAW38363.1"/>
    <property type="molecule type" value="Genomic_DNA"/>
</dbReference>
<dbReference type="RefSeq" id="WP_001011598.1">
    <property type="nucleotide sequence ID" value="NZ_JBGOFO010000006.1"/>
</dbReference>
<dbReference type="SMR" id="Q5HER0"/>
<dbReference type="KEGG" id="sac:SACOL1922"/>
<dbReference type="HOGENOM" id="CLU_016922_1_5_9"/>
<dbReference type="UniPathway" id="UPA00251">
    <property type="reaction ID" value="UER00317"/>
</dbReference>
<dbReference type="Proteomes" id="UP000000530">
    <property type="component" value="Chromosome"/>
</dbReference>
<dbReference type="GO" id="GO:0005737">
    <property type="term" value="C:cytoplasm"/>
    <property type="evidence" value="ECO:0007669"/>
    <property type="project" value="UniProtKB-SubCell"/>
</dbReference>
<dbReference type="GO" id="GO:0042286">
    <property type="term" value="F:glutamate-1-semialdehyde 2,1-aminomutase activity"/>
    <property type="evidence" value="ECO:0007669"/>
    <property type="project" value="UniProtKB-UniRule"/>
</dbReference>
<dbReference type="GO" id="GO:0030170">
    <property type="term" value="F:pyridoxal phosphate binding"/>
    <property type="evidence" value="ECO:0007669"/>
    <property type="project" value="InterPro"/>
</dbReference>
<dbReference type="GO" id="GO:0008483">
    <property type="term" value="F:transaminase activity"/>
    <property type="evidence" value="ECO:0007669"/>
    <property type="project" value="InterPro"/>
</dbReference>
<dbReference type="GO" id="GO:0006782">
    <property type="term" value="P:protoporphyrinogen IX biosynthetic process"/>
    <property type="evidence" value="ECO:0007669"/>
    <property type="project" value="UniProtKB-UniRule"/>
</dbReference>
<dbReference type="CDD" id="cd00610">
    <property type="entry name" value="OAT_like"/>
    <property type="match status" value="1"/>
</dbReference>
<dbReference type="FunFam" id="3.40.640.10:FF:000021">
    <property type="entry name" value="Glutamate-1-semialdehyde 2,1-aminomutase"/>
    <property type="match status" value="1"/>
</dbReference>
<dbReference type="Gene3D" id="3.90.1150.10">
    <property type="entry name" value="Aspartate Aminotransferase, domain 1"/>
    <property type="match status" value="1"/>
</dbReference>
<dbReference type="Gene3D" id="3.40.640.10">
    <property type="entry name" value="Type I PLP-dependent aspartate aminotransferase-like (Major domain)"/>
    <property type="match status" value="1"/>
</dbReference>
<dbReference type="HAMAP" id="MF_00375">
    <property type="entry name" value="HemL_aminotrans_3"/>
    <property type="match status" value="1"/>
</dbReference>
<dbReference type="InterPro" id="IPR004639">
    <property type="entry name" value="4pyrrol_synth_GluAld_NH2Trfase"/>
</dbReference>
<dbReference type="InterPro" id="IPR005814">
    <property type="entry name" value="Aminotrans_3"/>
</dbReference>
<dbReference type="InterPro" id="IPR049704">
    <property type="entry name" value="Aminotrans_3_PPA_site"/>
</dbReference>
<dbReference type="InterPro" id="IPR015424">
    <property type="entry name" value="PyrdxlP-dep_Trfase"/>
</dbReference>
<dbReference type="InterPro" id="IPR015421">
    <property type="entry name" value="PyrdxlP-dep_Trfase_major"/>
</dbReference>
<dbReference type="InterPro" id="IPR015422">
    <property type="entry name" value="PyrdxlP-dep_Trfase_small"/>
</dbReference>
<dbReference type="NCBIfam" id="TIGR00713">
    <property type="entry name" value="hemL"/>
    <property type="match status" value="1"/>
</dbReference>
<dbReference type="NCBIfam" id="NF000818">
    <property type="entry name" value="PRK00062.1"/>
    <property type="match status" value="1"/>
</dbReference>
<dbReference type="NCBIfam" id="NF009055">
    <property type="entry name" value="PRK12389.1"/>
    <property type="match status" value="1"/>
</dbReference>
<dbReference type="PANTHER" id="PTHR43713">
    <property type="entry name" value="GLUTAMATE-1-SEMIALDEHYDE 2,1-AMINOMUTASE"/>
    <property type="match status" value="1"/>
</dbReference>
<dbReference type="PANTHER" id="PTHR43713:SF1">
    <property type="entry name" value="GLUTAMATE-1-SEMIALDEHYDE 2,1-AMINOMUTASE 2"/>
    <property type="match status" value="1"/>
</dbReference>
<dbReference type="Pfam" id="PF00202">
    <property type="entry name" value="Aminotran_3"/>
    <property type="match status" value="1"/>
</dbReference>
<dbReference type="SUPFAM" id="SSF53383">
    <property type="entry name" value="PLP-dependent transferases"/>
    <property type="match status" value="1"/>
</dbReference>
<dbReference type="PROSITE" id="PS00600">
    <property type="entry name" value="AA_TRANSFER_CLASS_3"/>
    <property type="match status" value="1"/>
</dbReference>
<keyword id="KW-0963">Cytoplasm</keyword>
<keyword id="KW-0413">Isomerase</keyword>
<keyword id="KW-0627">Porphyrin biosynthesis</keyword>
<keyword id="KW-0663">Pyridoxal phosphate</keyword>
<sequence>MNFSESERLQQLSNEYILGGVNSPSRSYKAVGGGAPVVMKEGHGAYLYDVDGNKFIDYLQAYGPIITGHAHPHITKAIQEQAAKGVLFGTPTELEIEFSKKLRDAIPSLEKIRFVNSGTEAVMTTIRVARAYTKRNKIIKFAGSYHGHSDLVLVAAGSGPSQLGSPDSAGVPESVAREVITVPFNDINAYKEAIEFWGDEIAAVLVEPIVGNFGMVMPQPGFLEEVNEISHNNGTLVIYDEVITAFRFHYGAAQDLLGVIPDLTAFGKIVGGGLPIGGYGGRQDIMEQVAPLGPAYQAGTMAGNPLSMKAGIALLEVLEQDGVYEKLDSLGQQLEEGLLKLIEKHNITATINRIYGSLTLYFTDEKVTHYDQVEHSDGEAFGKFFKLMLNQGINLAPSKFEAWFLTTEHTEEDIKQTLKAADYAFSQMK</sequence>
<protein>
    <recommendedName>
        <fullName evidence="1">Glutamate-1-semialdehyde 2,1-aminomutase 2</fullName>
        <shortName evidence="1">GSA 2</shortName>
        <ecNumber evidence="1">5.4.3.8</ecNumber>
    </recommendedName>
    <alternativeName>
        <fullName evidence="1">Glutamate-1-semialdehyde aminotransferase 2</fullName>
        <shortName evidence="1">GSA-AT 2</shortName>
    </alternativeName>
</protein>
<gene>
    <name evidence="1" type="primary">hemL2</name>
    <name type="synonym">gsaB</name>
    <name type="ordered locus">SACOL1922</name>
</gene>
<feature type="chain" id="PRO_0000120442" description="Glutamate-1-semialdehyde 2,1-aminomutase 2">
    <location>
        <begin position="1"/>
        <end position="429"/>
    </location>
</feature>
<feature type="modified residue" description="N6-(pyridoxal phosphate)lysine" evidence="1">
    <location>
        <position position="268"/>
    </location>
</feature>
<evidence type="ECO:0000255" key="1">
    <source>
        <dbReference type="HAMAP-Rule" id="MF_00375"/>
    </source>
</evidence>
<comment type="catalytic activity">
    <reaction evidence="1">
        <text>(S)-4-amino-5-oxopentanoate = 5-aminolevulinate</text>
        <dbReference type="Rhea" id="RHEA:14265"/>
        <dbReference type="ChEBI" id="CHEBI:57501"/>
        <dbReference type="ChEBI" id="CHEBI:356416"/>
        <dbReference type="EC" id="5.4.3.8"/>
    </reaction>
</comment>
<comment type="cofactor">
    <cofactor evidence="1">
        <name>pyridoxal 5'-phosphate</name>
        <dbReference type="ChEBI" id="CHEBI:597326"/>
    </cofactor>
</comment>
<comment type="pathway">
    <text evidence="1">Porphyrin-containing compound metabolism; protoporphyrin-IX biosynthesis; 5-aminolevulinate from L-glutamyl-tRNA(Glu): step 2/2.</text>
</comment>
<comment type="subunit">
    <text evidence="1">Homodimer.</text>
</comment>
<comment type="subcellular location">
    <subcellularLocation>
        <location evidence="1">Cytoplasm</location>
    </subcellularLocation>
</comment>
<comment type="similarity">
    <text evidence="1">Belongs to the class-III pyridoxal-phosphate-dependent aminotransferase family. HemL subfamily.</text>
</comment>
<accession>Q5HER0</accession>